<feature type="chain" id="PRO_0000184680" description="Uncharacterized ATP-binding protein MJECL26">
    <location>
        <begin position="1"/>
        <end position="343"/>
    </location>
</feature>
<feature type="binding site" evidence="1">
    <location>
        <begin position="33"/>
        <end position="40"/>
    </location>
    <ligand>
        <name>ATP</name>
        <dbReference type="ChEBI" id="CHEBI:30616"/>
    </ligand>
</feature>
<accession>Q60285</accession>
<comment type="similarity">
    <text evidence="2">Belongs to the archaeal ATPase family.</text>
</comment>
<organism>
    <name type="scientific">Methanocaldococcus jannaschii (strain ATCC 43067 / DSM 2661 / JAL-1 / JCM 10045 / NBRC 100440)</name>
    <name type="common">Methanococcus jannaschii</name>
    <dbReference type="NCBI Taxonomy" id="243232"/>
    <lineage>
        <taxon>Archaea</taxon>
        <taxon>Methanobacteriati</taxon>
        <taxon>Methanobacteriota</taxon>
        <taxon>Methanomada group</taxon>
        <taxon>Methanococci</taxon>
        <taxon>Methanococcales</taxon>
        <taxon>Methanocaldococcaceae</taxon>
        <taxon>Methanocaldococcus</taxon>
    </lineage>
</organism>
<dbReference type="EMBL" id="L77118">
    <property type="protein sequence ID" value="AAC37097.1"/>
    <property type="molecule type" value="Genomic_DNA"/>
</dbReference>
<dbReference type="PIR" id="A64513">
    <property type="entry name" value="A64513"/>
</dbReference>
<dbReference type="PaxDb" id="243232-MJ_ECL26"/>
<dbReference type="DNASU" id="1450810"/>
<dbReference type="EnsemblBacteria" id="AAC37097">
    <property type="protein sequence ID" value="AAC37097"/>
    <property type="gene ID" value="MJ_ECL26"/>
</dbReference>
<dbReference type="KEGG" id="mja:MJ_ECL26"/>
<dbReference type="eggNOG" id="arCOG03407">
    <property type="taxonomic scope" value="Archaea"/>
</dbReference>
<dbReference type="HOGENOM" id="CLU_068608_0_0_2"/>
<dbReference type="InParanoid" id="Q60285"/>
<dbReference type="PhylomeDB" id="Q60285"/>
<dbReference type="Proteomes" id="UP000000805">
    <property type="component" value="Plasmid pDSM2661_1"/>
</dbReference>
<dbReference type="GO" id="GO:0005524">
    <property type="term" value="F:ATP binding"/>
    <property type="evidence" value="ECO:0007669"/>
    <property type="project" value="UniProtKB-KW"/>
</dbReference>
<dbReference type="GO" id="GO:0016887">
    <property type="term" value="F:ATP hydrolysis activity"/>
    <property type="evidence" value="ECO:0007669"/>
    <property type="project" value="InterPro"/>
</dbReference>
<dbReference type="CDD" id="cd00009">
    <property type="entry name" value="AAA"/>
    <property type="match status" value="1"/>
</dbReference>
<dbReference type="Gene3D" id="3.40.50.300">
    <property type="entry name" value="P-loop containing nucleotide triphosphate hydrolases"/>
    <property type="match status" value="1"/>
</dbReference>
<dbReference type="Gene3D" id="1.10.10.10">
    <property type="entry name" value="Winged helix-like DNA-binding domain superfamily/Winged helix DNA-binding domain"/>
    <property type="match status" value="1"/>
</dbReference>
<dbReference type="InterPro" id="IPR003593">
    <property type="entry name" value="AAA+_ATPase"/>
</dbReference>
<dbReference type="InterPro" id="IPR051667">
    <property type="entry name" value="Archaeal_ATPase_domain"/>
</dbReference>
<dbReference type="InterPro" id="IPR011579">
    <property type="entry name" value="ATPase_dom"/>
</dbReference>
<dbReference type="InterPro" id="IPR049081">
    <property type="entry name" value="MJ1010-like_2nd"/>
</dbReference>
<dbReference type="InterPro" id="IPR027417">
    <property type="entry name" value="P-loop_NTPase"/>
</dbReference>
<dbReference type="InterPro" id="IPR036388">
    <property type="entry name" value="WH-like_DNA-bd_sf"/>
</dbReference>
<dbReference type="PANTHER" id="PTHR37096:SF1">
    <property type="entry name" value="AAA+ ATPASE DOMAIN-CONTAINING PROTEIN"/>
    <property type="match status" value="1"/>
</dbReference>
<dbReference type="PANTHER" id="PTHR37096">
    <property type="entry name" value="YALI0E33429P"/>
    <property type="match status" value="1"/>
</dbReference>
<dbReference type="Pfam" id="PF01637">
    <property type="entry name" value="ATPase_2"/>
    <property type="match status" value="1"/>
</dbReference>
<dbReference type="Pfam" id="PF21690">
    <property type="entry name" value="MJ1010-like_2nd"/>
    <property type="match status" value="1"/>
</dbReference>
<dbReference type="SMART" id="SM00382">
    <property type="entry name" value="AAA"/>
    <property type="match status" value="1"/>
</dbReference>
<dbReference type="SUPFAM" id="SSF52540">
    <property type="entry name" value="P-loop containing nucleoside triphosphate hydrolases"/>
    <property type="match status" value="1"/>
</dbReference>
<sequence>MGEIMKFYDREKELNYLKTYCQLEPNSILFVYGPKSSGKSTVMRRVIKELENSNIVFFYYNLRKYATPTRDEFLRVFFEKSDKKYLLNKLELNLGVCKFGIEENFDFNNLCLNDVFAKINESINAVVEEGKKPVLIIDELQKLKNIYFNGGKSLLNELFNLFVSLTKMEHLCHVICLTSDTLFIDEIYRNSTLKNASEYYLIDWLRKGTIRNILKEEGFSEEEINYALDYLSLPYEISQLINNKKLGLSVEQTIKQWINVEKDGLKYLIDTTDLDEEGLYNVLSKFKDKIKISYDKEVKKEEMKYLKFLIENEILFYDVINGIIKPTSIIEWHAIKEIINAMQ</sequence>
<reference key="1">
    <citation type="journal article" date="1996" name="Science">
        <title>Complete genome sequence of the methanogenic archaeon, Methanococcus jannaschii.</title>
        <authorList>
            <person name="Bult C.J."/>
            <person name="White O."/>
            <person name="Olsen G.J."/>
            <person name="Zhou L."/>
            <person name="Fleischmann R.D."/>
            <person name="Sutton G.G."/>
            <person name="Blake J.A."/>
            <person name="FitzGerald L.M."/>
            <person name="Clayton R.A."/>
            <person name="Gocayne J.D."/>
            <person name="Kerlavage A.R."/>
            <person name="Dougherty B.A."/>
            <person name="Tomb J.-F."/>
            <person name="Adams M.D."/>
            <person name="Reich C.I."/>
            <person name="Overbeek R."/>
            <person name="Kirkness E.F."/>
            <person name="Weinstock K.G."/>
            <person name="Merrick J.M."/>
            <person name="Glodek A."/>
            <person name="Scott J.L."/>
            <person name="Geoghagen N.S.M."/>
            <person name="Weidman J.F."/>
            <person name="Fuhrmann J.L."/>
            <person name="Nguyen D."/>
            <person name="Utterback T.R."/>
            <person name="Kelley J.M."/>
            <person name="Peterson J.D."/>
            <person name="Sadow P.W."/>
            <person name="Hanna M.C."/>
            <person name="Cotton M.D."/>
            <person name="Roberts K.M."/>
            <person name="Hurst M.A."/>
            <person name="Kaine B.P."/>
            <person name="Borodovsky M."/>
            <person name="Klenk H.-P."/>
            <person name="Fraser C.M."/>
            <person name="Smith H.O."/>
            <person name="Woese C.R."/>
            <person name="Venter J.C."/>
        </authorList>
    </citation>
    <scope>NUCLEOTIDE SEQUENCE [LARGE SCALE GENOMIC DNA]</scope>
    <source>
        <strain>ATCC 43067 / DSM 2661 / JAL-1 / JCM 10045 / NBRC 100440</strain>
    </source>
</reference>
<reference key="2">
    <citation type="journal article" date="1997" name="Science">
        <title>Evidence for a family of archaeal ATPases.</title>
        <authorList>
            <person name="Koonin E.V."/>
        </authorList>
    </citation>
    <scope>SIMILARITY</scope>
</reference>
<proteinExistence type="inferred from homology"/>
<name>Y3526_METJA</name>
<keyword id="KW-0067">ATP-binding</keyword>
<keyword id="KW-0547">Nucleotide-binding</keyword>
<keyword id="KW-0614">Plasmid</keyword>
<keyword id="KW-1185">Reference proteome</keyword>
<gene>
    <name type="ordered locus">MJECL26</name>
</gene>
<evidence type="ECO:0000255" key="1"/>
<evidence type="ECO:0000305" key="2"/>
<geneLocation type="plasmid">
    <name>large ECE</name>
</geneLocation>
<protein>
    <recommendedName>
        <fullName>Uncharacterized ATP-binding protein MJECL26</fullName>
    </recommendedName>
</protein>